<evidence type="ECO:0000255" key="1">
    <source>
        <dbReference type="HAMAP-Rule" id="MF_00131"/>
    </source>
</evidence>
<keyword id="KW-0028">Amino-acid biosynthesis</keyword>
<keyword id="KW-0057">Aromatic amino acid biosynthesis</keyword>
<keyword id="KW-0456">Lyase</keyword>
<keyword id="KW-0822">Tryptophan biosynthesis</keyword>
<accession>A6L7N1</accession>
<dbReference type="EC" id="4.2.1.20" evidence="1"/>
<dbReference type="EMBL" id="CP000139">
    <property type="protein sequence ID" value="ABR41695.1"/>
    <property type="molecule type" value="Genomic_DNA"/>
</dbReference>
<dbReference type="RefSeq" id="WP_012056009.1">
    <property type="nucleotide sequence ID" value="NZ_JANSWM010000087.1"/>
</dbReference>
<dbReference type="SMR" id="A6L7N1"/>
<dbReference type="STRING" id="435590.BVU_4093"/>
<dbReference type="PaxDb" id="435590-BVU_4093"/>
<dbReference type="GeneID" id="5305052"/>
<dbReference type="KEGG" id="bvu:BVU_4093"/>
<dbReference type="eggNOG" id="COG0159">
    <property type="taxonomic scope" value="Bacteria"/>
</dbReference>
<dbReference type="HOGENOM" id="CLU_016734_0_0_10"/>
<dbReference type="BioCyc" id="BVUL435590:G1G59-4232-MONOMER"/>
<dbReference type="UniPathway" id="UPA00035">
    <property type="reaction ID" value="UER00044"/>
</dbReference>
<dbReference type="Proteomes" id="UP000002861">
    <property type="component" value="Chromosome"/>
</dbReference>
<dbReference type="GO" id="GO:0005829">
    <property type="term" value="C:cytosol"/>
    <property type="evidence" value="ECO:0007669"/>
    <property type="project" value="TreeGrafter"/>
</dbReference>
<dbReference type="GO" id="GO:0004834">
    <property type="term" value="F:tryptophan synthase activity"/>
    <property type="evidence" value="ECO:0007669"/>
    <property type="project" value="UniProtKB-UniRule"/>
</dbReference>
<dbReference type="CDD" id="cd04724">
    <property type="entry name" value="Tryptophan_synthase_alpha"/>
    <property type="match status" value="1"/>
</dbReference>
<dbReference type="FunFam" id="3.20.20.70:FF:000037">
    <property type="entry name" value="Tryptophan synthase alpha chain"/>
    <property type="match status" value="1"/>
</dbReference>
<dbReference type="Gene3D" id="3.20.20.70">
    <property type="entry name" value="Aldolase class I"/>
    <property type="match status" value="1"/>
</dbReference>
<dbReference type="HAMAP" id="MF_00131">
    <property type="entry name" value="Trp_synth_alpha"/>
    <property type="match status" value="1"/>
</dbReference>
<dbReference type="InterPro" id="IPR013785">
    <property type="entry name" value="Aldolase_TIM"/>
</dbReference>
<dbReference type="InterPro" id="IPR011060">
    <property type="entry name" value="RibuloseP-bd_barrel"/>
</dbReference>
<dbReference type="InterPro" id="IPR018204">
    <property type="entry name" value="Trp_synthase_alpha_AS"/>
</dbReference>
<dbReference type="InterPro" id="IPR002028">
    <property type="entry name" value="Trp_synthase_suA"/>
</dbReference>
<dbReference type="NCBIfam" id="TIGR00262">
    <property type="entry name" value="trpA"/>
    <property type="match status" value="1"/>
</dbReference>
<dbReference type="PANTHER" id="PTHR43406:SF1">
    <property type="entry name" value="TRYPTOPHAN SYNTHASE ALPHA CHAIN, CHLOROPLASTIC"/>
    <property type="match status" value="1"/>
</dbReference>
<dbReference type="PANTHER" id="PTHR43406">
    <property type="entry name" value="TRYPTOPHAN SYNTHASE, ALPHA CHAIN"/>
    <property type="match status" value="1"/>
</dbReference>
<dbReference type="Pfam" id="PF00290">
    <property type="entry name" value="Trp_syntA"/>
    <property type="match status" value="1"/>
</dbReference>
<dbReference type="SUPFAM" id="SSF51366">
    <property type="entry name" value="Ribulose-phoshate binding barrel"/>
    <property type="match status" value="1"/>
</dbReference>
<dbReference type="PROSITE" id="PS00167">
    <property type="entry name" value="TRP_SYNTHASE_ALPHA"/>
    <property type="match status" value="1"/>
</dbReference>
<proteinExistence type="inferred from homology"/>
<name>TRPA_PHOV8</name>
<gene>
    <name evidence="1" type="primary">trpA</name>
    <name type="ordered locus">BVU_4093</name>
</gene>
<protein>
    <recommendedName>
        <fullName evidence="1">Tryptophan synthase alpha chain</fullName>
        <ecNumber evidence="1">4.2.1.20</ecNumber>
    </recommendedName>
</protein>
<organism>
    <name type="scientific">Phocaeicola vulgatus (strain ATCC 8482 / DSM 1447 / JCM 5826 / CCUG 4940 / NBRC 14291 / NCTC 11154)</name>
    <name type="common">Bacteroides vulgatus</name>
    <dbReference type="NCBI Taxonomy" id="435590"/>
    <lineage>
        <taxon>Bacteria</taxon>
        <taxon>Pseudomonadati</taxon>
        <taxon>Bacteroidota</taxon>
        <taxon>Bacteroidia</taxon>
        <taxon>Bacteroidales</taxon>
        <taxon>Bacteroidaceae</taxon>
        <taxon>Phocaeicola</taxon>
    </lineage>
</organism>
<reference key="1">
    <citation type="journal article" date="2007" name="PLoS Biol.">
        <title>Evolution of symbiotic bacteria in the distal human intestine.</title>
        <authorList>
            <person name="Xu J."/>
            <person name="Mahowald M.A."/>
            <person name="Ley R.E."/>
            <person name="Lozupone C.A."/>
            <person name="Hamady M."/>
            <person name="Martens E.C."/>
            <person name="Henrissat B."/>
            <person name="Coutinho P.M."/>
            <person name="Minx P."/>
            <person name="Latreille P."/>
            <person name="Cordum H."/>
            <person name="Van Brunt A."/>
            <person name="Kim K."/>
            <person name="Fulton R.S."/>
            <person name="Fulton L.A."/>
            <person name="Clifton S.W."/>
            <person name="Wilson R.K."/>
            <person name="Knight R.D."/>
            <person name="Gordon J.I."/>
        </authorList>
    </citation>
    <scope>NUCLEOTIDE SEQUENCE [LARGE SCALE GENOMIC DNA]</scope>
    <source>
        <strain>ATCC 8482 / DSM 1447 / JCM 5826 / CCUG 4940 / NBRC 14291 / NCTC 11154</strain>
    </source>
</reference>
<comment type="function">
    <text evidence="1">The alpha subunit is responsible for the aldol cleavage of indoleglycerol phosphate to indole and glyceraldehyde 3-phosphate.</text>
</comment>
<comment type="catalytic activity">
    <reaction evidence="1">
        <text>(1S,2R)-1-C-(indol-3-yl)glycerol 3-phosphate + L-serine = D-glyceraldehyde 3-phosphate + L-tryptophan + H2O</text>
        <dbReference type="Rhea" id="RHEA:10532"/>
        <dbReference type="ChEBI" id="CHEBI:15377"/>
        <dbReference type="ChEBI" id="CHEBI:33384"/>
        <dbReference type="ChEBI" id="CHEBI:57912"/>
        <dbReference type="ChEBI" id="CHEBI:58866"/>
        <dbReference type="ChEBI" id="CHEBI:59776"/>
        <dbReference type="EC" id="4.2.1.20"/>
    </reaction>
</comment>
<comment type="pathway">
    <text evidence="1">Amino-acid biosynthesis; L-tryptophan biosynthesis; L-tryptophan from chorismate: step 5/5.</text>
</comment>
<comment type="subunit">
    <text evidence="1">Tetramer of two alpha and two beta chains.</text>
</comment>
<comment type="similarity">
    <text evidence="1">Belongs to the TrpA family.</text>
</comment>
<feature type="chain" id="PRO_1000018169" description="Tryptophan synthase alpha chain">
    <location>
        <begin position="1"/>
        <end position="258"/>
    </location>
</feature>
<feature type="active site" description="Proton acceptor" evidence="1">
    <location>
        <position position="46"/>
    </location>
</feature>
<feature type="active site" description="Proton acceptor" evidence="1">
    <location>
        <position position="57"/>
    </location>
</feature>
<sequence length="258" mass="28987">MNRINQLFSTKQKDILSIYFCAGFPTLEGTASTIKVLEKKGINMIEIGIPFSDPMADGPVIQHAATRALKNGMTLKLLFDQLKDIRKEVQIPLVLMGYLNPIMQYGFKDFCRTCRETGIDGVIIPDLPFKDYMEEYRSIAEEQDVRIIMLITPETSEERIRLIDEHTDGFIYMVSSAAITGAQKDFNAQKQAYFQRIADMNLRNPRMIGFGISNKQTFETASAHAAGAIIGSKFVTLLDEEDGDTEKAADKLLEALKN</sequence>